<feature type="signal peptide" evidence="1">
    <location>
        <begin position="1"/>
        <end position="46"/>
    </location>
</feature>
<feature type="chain" id="PRO_0000337760" description="Iron-regulated surface determinant protein A">
    <location>
        <begin position="47"/>
        <end position="316"/>
    </location>
</feature>
<feature type="propeptide" id="PRO_0000337761" description="Removed by sortase A" evidence="6">
    <location>
        <begin position="317"/>
        <end position="350"/>
    </location>
</feature>
<feature type="domain" description="NEAT" evidence="5">
    <location>
        <begin position="62"/>
        <end position="184"/>
    </location>
</feature>
<feature type="region of interest" description="Disordered" evidence="7">
    <location>
        <begin position="188"/>
        <end position="314"/>
    </location>
</feature>
<feature type="short sequence motif" description="LPXTG sorting signal" evidence="6">
    <location>
        <begin position="313"/>
        <end position="317"/>
    </location>
</feature>
<feature type="compositionally biased region" description="Low complexity" evidence="7">
    <location>
        <begin position="203"/>
        <end position="214"/>
    </location>
</feature>
<feature type="compositionally biased region" description="Polar residues" evidence="7">
    <location>
        <begin position="252"/>
        <end position="268"/>
    </location>
</feature>
<feature type="compositionally biased region" description="Polar residues" evidence="7">
    <location>
        <begin position="278"/>
        <end position="296"/>
    </location>
</feature>
<feature type="compositionally biased region" description="Basic and acidic residues" evidence="7">
    <location>
        <begin position="299"/>
        <end position="314"/>
    </location>
</feature>
<feature type="binding site" evidence="1">
    <location>
        <position position="75"/>
    </location>
    <ligand>
        <name>heme</name>
        <dbReference type="ChEBI" id="CHEBI:30413"/>
    </ligand>
</feature>
<feature type="binding site" evidence="1">
    <location>
        <position position="82"/>
    </location>
    <ligand>
        <name>heme</name>
        <dbReference type="ChEBI" id="CHEBI:30413"/>
    </ligand>
</feature>
<feature type="binding site" description="axial binding residue" evidence="4">
    <location>
        <position position="166"/>
    </location>
    <ligand>
        <name>heme</name>
        <dbReference type="ChEBI" id="CHEBI:30413"/>
    </ligand>
    <ligandPart>
        <name>Fe</name>
        <dbReference type="ChEBI" id="CHEBI:18248"/>
    </ligandPart>
</feature>
<feature type="modified residue" description="Pentaglycyl murein peptidoglycan amidated threonine" evidence="6">
    <location>
        <position position="316"/>
    </location>
</feature>
<sequence>MTKHYLNSKYQSEQRSSAMKKITMGTASIILGSLVYIGADSQQVNAATEATNATNNQSTQVSQATSQPINFQVQKDGSSEKSHMDDYMQHPGKVIKQNNKYYFQTVLNNASFWKEYKFYNANNQELATTVVNDNKKADTRTINVAVEPGYKSLTTKVHIVVPQINYNHRYTTHLEFEKAIPTLADAAKPNNVKPVQPKPAQPKTPTEQTKPVQPKVEKVKPTVTTTSKVEDNHSTKVVSTDTTKDQTKTQTAHTVKTAQTAQEQNKVQTPVKDVATAKSESNNQAVSDNKSQQTNKVTKHNETPKQASKAKELPKTGLTSVDNFISTVAFATLALLGSLSLLLFKRKESK</sequence>
<name>ISDA_STAAT</name>
<keyword id="KW-0134">Cell wall</keyword>
<keyword id="KW-0349">Heme</keyword>
<keyword id="KW-0408">Iron</keyword>
<keyword id="KW-0479">Metal-binding</keyword>
<keyword id="KW-0572">Peptidoglycan-anchor</keyword>
<keyword id="KW-0964">Secreted</keyword>
<keyword id="KW-0732">Signal</keyword>
<protein>
    <recommendedName>
        <fullName>Iron-regulated surface determinant protein A</fullName>
    </recommendedName>
    <alternativeName>
        <fullName>Fur-regulated protein A</fullName>
    </alternativeName>
    <alternativeName>
        <fullName>Staphylococcal transferrin-binding protein A</fullName>
    </alternativeName>
</protein>
<comment type="function">
    <text evidence="2 3">Cell wall-anchored surface receptor that participates in the extraction of heme from oxidized methemoglobin/metHb to enable growth on hemoglobin as a sole iron source (By similarity). Receives heme from IsdB and transfers it to IsdC (By similarity). Also plays a role in the inhibition of host immune response. Protects S.aureus against the bactericidal protease activity of apolactoferrin. Decreases bacterial cellular hydrophobicity, which renders S.aureus resistant to bactericidal human skin fatty acids as well as to beta-defensins and cathelicidin. Also binds fibronectin and chains B-beta and gamma of fibrinogen, promoting clumping of S.aureus with fibrinogen. Involved in adherence of S.aureus to human desquamated nasal epithelial cells and is required for nasal colonization (By similarity).</text>
</comment>
<comment type="subunit">
    <text evidence="2 3">Monomer. Interacts with IsdC (By similarity). Interacts with IsdB (By similarity).</text>
</comment>
<comment type="subcellular location">
    <subcellularLocation>
        <location evidence="2">Secreted</location>
        <location evidence="2">Cell wall</location>
        <topology evidence="2">Peptidoglycan-anchor</topology>
    </subcellularLocation>
    <text evidence="2">Encodes an LPXTG motif-containing sorting signal that targets to the cell wall, which is catalyzed by sortase A.</text>
</comment>
<comment type="induction">
    <text evidence="1">Repressed by fur in the presence of iron.</text>
</comment>
<comment type="domain">
    <text evidence="1">The NEAT domain is responsible for binding Fe(3+) and Fe(2+) heme and fibrinogen. The NEAT domain is an inhibitor of apolactoferrin activity, while the C-domain confers resistance to bovine lactoferricin (By similarity).</text>
</comment>
<comment type="similarity">
    <text evidence="8">Belongs to the IsdA family.</text>
</comment>
<accession>A8Z1R0</accession>
<organism>
    <name type="scientific">Staphylococcus aureus (strain USA300 / TCH1516)</name>
    <dbReference type="NCBI Taxonomy" id="451516"/>
    <lineage>
        <taxon>Bacteria</taxon>
        <taxon>Bacillati</taxon>
        <taxon>Bacillota</taxon>
        <taxon>Bacilli</taxon>
        <taxon>Bacillales</taxon>
        <taxon>Staphylococcaceae</taxon>
        <taxon>Staphylococcus</taxon>
    </lineage>
</organism>
<proteinExistence type="inferred from homology"/>
<evidence type="ECO:0000250" key="1"/>
<evidence type="ECO:0000250" key="2">
    <source>
        <dbReference type="UniProtKB" id="A6QG31"/>
    </source>
</evidence>
<evidence type="ECO:0000250" key="3">
    <source>
        <dbReference type="UniProtKB" id="Q7A152"/>
    </source>
</evidence>
<evidence type="ECO:0000250" key="4">
    <source>
        <dbReference type="UniProtKB" id="Q7A655"/>
    </source>
</evidence>
<evidence type="ECO:0000255" key="5">
    <source>
        <dbReference type="PROSITE-ProRule" id="PRU00337"/>
    </source>
</evidence>
<evidence type="ECO:0000255" key="6">
    <source>
        <dbReference type="PROSITE-ProRule" id="PRU00477"/>
    </source>
</evidence>
<evidence type="ECO:0000256" key="7">
    <source>
        <dbReference type="SAM" id="MobiDB-lite"/>
    </source>
</evidence>
<evidence type="ECO:0000305" key="8"/>
<gene>
    <name type="primary">isdA</name>
    <name type="synonym">frpA</name>
    <name type="synonym">stbA</name>
    <name type="ordered locus">USA300HOU_1064</name>
</gene>
<dbReference type="EMBL" id="CP000730">
    <property type="protein sequence ID" value="ABX29083.1"/>
    <property type="molecule type" value="Genomic_DNA"/>
</dbReference>
<dbReference type="RefSeq" id="WP_000160859.1">
    <property type="nucleotide sequence ID" value="NC_010079.1"/>
</dbReference>
<dbReference type="SMR" id="A8Z1R0"/>
<dbReference type="KEGG" id="sax:USA300HOU_1064"/>
<dbReference type="HOGENOM" id="CLU_068057_0_0_9"/>
<dbReference type="PRO" id="PR:A8Z1R0"/>
<dbReference type="GO" id="GO:0005576">
    <property type="term" value="C:extracellular region"/>
    <property type="evidence" value="ECO:0007669"/>
    <property type="project" value="UniProtKB-KW"/>
</dbReference>
<dbReference type="GO" id="GO:0046872">
    <property type="term" value="F:metal ion binding"/>
    <property type="evidence" value="ECO:0007669"/>
    <property type="project" value="UniProtKB-KW"/>
</dbReference>
<dbReference type="CDD" id="cd06920">
    <property type="entry name" value="NEAT"/>
    <property type="match status" value="1"/>
</dbReference>
<dbReference type="Gene3D" id="2.60.40.1850">
    <property type="match status" value="1"/>
</dbReference>
<dbReference type="InterPro" id="IPR050436">
    <property type="entry name" value="IsdA"/>
</dbReference>
<dbReference type="InterPro" id="IPR019931">
    <property type="entry name" value="LPXTG_anchor"/>
</dbReference>
<dbReference type="InterPro" id="IPR006635">
    <property type="entry name" value="NEAT_dom"/>
</dbReference>
<dbReference type="InterPro" id="IPR037250">
    <property type="entry name" value="NEAT_dom_sf"/>
</dbReference>
<dbReference type="NCBIfam" id="TIGR01167">
    <property type="entry name" value="LPXTG_anchor"/>
    <property type="match status" value="1"/>
</dbReference>
<dbReference type="PANTHER" id="PTHR37824">
    <property type="entry name" value="IRON-REGULATED SURFACE DETERMINANT PROTEIN C"/>
    <property type="match status" value="1"/>
</dbReference>
<dbReference type="PANTHER" id="PTHR37824:SF1">
    <property type="entry name" value="IRON-REGULATED SURFACE DETERMINANT PROTEIN C"/>
    <property type="match status" value="1"/>
</dbReference>
<dbReference type="Pfam" id="PF00746">
    <property type="entry name" value="Gram_pos_anchor"/>
    <property type="match status" value="1"/>
</dbReference>
<dbReference type="Pfam" id="PF05031">
    <property type="entry name" value="NEAT"/>
    <property type="match status" value="1"/>
</dbReference>
<dbReference type="SMART" id="SM00725">
    <property type="entry name" value="NEAT"/>
    <property type="match status" value="1"/>
</dbReference>
<dbReference type="SUPFAM" id="SSF158911">
    <property type="entry name" value="NEAT domain-like"/>
    <property type="match status" value="1"/>
</dbReference>
<dbReference type="PROSITE" id="PS50847">
    <property type="entry name" value="GRAM_POS_ANCHORING"/>
    <property type="match status" value="1"/>
</dbReference>
<dbReference type="PROSITE" id="PS50978">
    <property type="entry name" value="NEAT"/>
    <property type="match status" value="1"/>
</dbReference>
<reference key="1">
    <citation type="journal article" date="2007" name="BMC Microbiol.">
        <title>Subtle genetic changes enhance virulence of methicillin resistant and sensitive Staphylococcus aureus.</title>
        <authorList>
            <person name="Highlander S.K."/>
            <person name="Hulten K.G."/>
            <person name="Qin X."/>
            <person name="Jiang H."/>
            <person name="Yerrapragada S."/>
            <person name="Mason E.O. Jr."/>
            <person name="Shang Y."/>
            <person name="Williams T.M."/>
            <person name="Fortunov R.M."/>
            <person name="Liu Y."/>
            <person name="Igboeli O."/>
            <person name="Petrosino J."/>
            <person name="Tirumalai M."/>
            <person name="Uzman A."/>
            <person name="Fox G.E."/>
            <person name="Cardenas A.M."/>
            <person name="Muzny D.M."/>
            <person name="Hemphill L."/>
            <person name="Ding Y."/>
            <person name="Dugan S."/>
            <person name="Blyth P.R."/>
            <person name="Buhay C.J."/>
            <person name="Dinh H.H."/>
            <person name="Hawes A.C."/>
            <person name="Holder M."/>
            <person name="Kovar C.L."/>
            <person name="Lee S.L."/>
            <person name="Liu W."/>
            <person name="Nazareth L.V."/>
            <person name="Wang Q."/>
            <person name="Zhou J."/>
            <person name="Kaplan S.L."/>
            <person name="Weinstock G.M."/>
        </authorList>
    </citation>
    <scope>NUCLEOTIDE SEQUENCE [LARGE SCALE GENOMIC DNA]</scope>
    <source>
        <strain>USA300 / TCH1516</strain>
    </source>
</reference>